<proteinExistence type="inferred from homology"/>
<dbReference type="EC" id="1.17.1.8" evidence="1"/>
<dbReference type="EMBL" id="CP000361">
    <property type="protein sequence ID" value="ABV68306.1"/>
    <property type="molecule type" value="Genomic_DNA"/>
</dbReference>
<dbReference type="RefSeq" id="WP_012147963.1">
    <property type="nucleotide sequence ID" value="NC_009850.1"/>
</dbReference>
<dbReference type="SMR" id="A8EWI3"/>
<dbReference type="STRING" id="367737.Abu_2089"/>
<dbReference type="GeneID" id="24304530"/>
<dbReference type="KEGG" id="abu:Abu_2089"/>
<dbReference type="eggNOG" id="COG0289">
    <property type="taxonomic scope" value="Bacteria"/>
</dbReference>
<dbReference type="HOGENOM" id="CLU_047479_2_2_7"/>
<dbReference type="UniPathway" id="UPA00034">
    <property type="reaction ID" value="UER00018"/>
</dbReference>
<dbReference type="Proteomes" id="UP000001136">
    <property type="component" value="Chromosome"/>
</dbReference>
<dbReference type="GO" id="GO:0005829">
    <property type="term" value="C:cytosol"/>
    <property type="evidence" value="ECO:0007669"/>
    <property type="project" value="TreeGrafter"/>
</dbReference>
<dbReference type="GO" id="GO:0008839">
    <property type="term" value="F:4-hydroxy-tetrahydrodipicolinate reductase"/>
    <property type="evidence" value="ECO:0007669"/>
    <property type="project" value="UniProtKB-EC"/>
</dbReference>
<dbReference type="GO" id="GO:0051287">
    <property type="term" value="F:NAD binding"/>
    <property type="evidence" value="ECO:0007669"/>
    <property type="project" value="UniProtKB-UniRule"/>
</dbReference>
<dbReference type="GO" id="GO:0050661">
    <property type="term" value="F:NADP binding"/>
    <property type="evidence" value="ECO:0007669"/>
    <property type="project" value="UniProtKB-UniRule"/>
</dbReference>
<dbReference type="GO" id="GO:0016726">
    <property type="term" value="F:oxidoreductase activity, acting on CH or CH2 groups, NAD or NADP as acceptor"/>
    <property type="evidence" value="ECO:0007669"/>
    <property type="project" value="UniProtKB-UniRule"/>
</dbReference>
<dbReference type="GO" id="GO:0019877">
    <property type="term" value="P:diaminopimelate biosynthetic process"/>
    <property type="evidence" value="ECO:0007669"/>
    <property type="project" value="UniProtKB-UniRule"/>
</dbReference>
<dbReference type="GO" id="GO:0009089">
    <property type="term" value="P:lysine biosynthetic process via diaminopimelate"/>
    <property type="evidence" value="ECO:0007669"/>
    <property type="project" value="UniProtKB-UniRule"/>
</dbReference>
<dbReference type="CDD" id="cd02274">
    <property type="entry name" value="DHDPR_N"/>
    <property type="match status" value="1"/>
</dbReference>
<dbReference type="FunFam" id="3.30.360.10:FF:000004">
    <property type="entry name" value="4-hydroxy-tetrahydrodipicolinate reductase"/>
    <property type="match status" value="1"/>
</dbReference>
<dbReference type="Gene3D" id="3.30.360.10">
    <property type="entry name" value="Dihydrodipicolinate Reductase, domain 2"/>
    <property type="match status" value="1"/>
</dbReference>
<dbReference type="Gene3D" id="3.40.50.720">
    <property type="entry name" value="NAD(P)-binding Rossmann-like Domain"/>
    <property type="match status" value="1"/>
</dbReference>
<dbReference type="HAMAP" id="MF_00102">
    <property type="entry name" value="DapB"/>
    <property type="match status" value="1"/>
</dbReference>
<dbReference type="InterPro" id="IPR022663">
    <property type="entry name" value="DapB_C"/>
</dbReference>
<dbReference type="InterPro" id="IPR000846">
    <property type="entry name" value="DapB_N"/>
</dbReference>
<dbReference type="InterPro" id="IPR022664">
    <property type="entry name" value="DapB_N_CS"/>
</dbReference>
<dbReference type="InterPro" id="IPR023940">
    <property type="entry name" value="DHDPR_bac"/>
</dbReference>
<dbReference type="InterPro" id="IPR036291">
    <property type="entry name" value="NAD(P)-bd_dom_sf"/>
</dbReference>
<dbReference type="NCBIfam" id="TIGR00036">
    <property type="entry name" value="dapB"/>
    <property type="match status" value="1"/>
</dbReference>
<dbReference type="PANTHER" id="PTHR20836:SF0">
    <property type="entry name" value="4-HYDROXY-TETRAHYDRODIPICOLINATE REDUCTASE 1, CHLOROPLASTIC-RELATED"/>
    <property type="match status" value="1"/>
</dbReference>
<dbReference type="PANTHER" id="PTHR20836">
    <property type="entry name" value="DIHYDRODIPICOLINATE REDUCTASE"/>
    <property type="match status" value="1"/>
</dbReference>
<dbReference type="Pfam" id="PF05173">
    <property type="entry name" value="DapB_C"/>
    <property type="match status" value="1"/>
</dbReference>
<dbReference type="Pfam" id="PF01113">
    <property type="entry name" value="DapB_N"/>
    <property type="match status" value="1"/>
</dbReference>
<dbReference type="PIRSF" id="PIRSF000161">
    <property type="entry name" value="DHPR"/>
    <property type="match status" value="1"/>
</dbReference>
<dbReference type="SUPFAM" id="SSF55347">
    <property type="entry name" value="Glyceraldehyde-3-phosphate dehydrogenase-like, C-terminal domain"/>
    <property type="match status" value="1"/>
</dbReference>
<dbReference type="SUPFAM" id="SSF51735">
    <property type="entry name" value="NAD(P)-binding Rossmann-fold domains"/>
    <property type="match status" value="1"/>
</dbReference>
<dbReference type="PROSITE" id="PS01298">
    <property type="entry name" value="DAPB"/>
    <property type="match status" value="1"/>
</dbReference>
<gene>
    <name evidence="1" type="primary">dapB</name>
    <name type="ordered locus">Abu_2089</name>
</gene>
<keyword id="KW-0028">Amino-acid biosynthesis</keyword>
<keyword id="KW-0963">Cytoplasm</keyword>
<keyword id="KW-0220">Diaminopimelate biosynthesis</keyword>
<keyword id="KW-0457">Lysine biosynthesis</keyword>
<keyword id="KW-0520">NAD</keyword>
<keyword id="KW-0521">NADP</keyword>
<keyword id="KW-0560">Oxidoreductase</keyword>
<keyword id="KW-1185">Reference proteome</keyword>
<protein>
    <recommendedName>
        <fullName evidence="1">4-hydroxy-tetrahydrodipicolinate reductase</fullName>
        <shortName evidence="1">HTPA reductase</shortName>
        <ecNumber evidence="1">1.17.1.8</ecNumber>
    </recommendedName>
</protein>
<accession>A8EWI3</accession>
<name>DAPB_ALIB4</name>
<comment type="function">
    <text evidence="1">Catalyzes the conversion of 4-hydroxy-tetrahydrodipicolinate (HTPA) to tetrahydrodipicolinate.</text>
</comment>
<comment type="catalytic activity">
    <reaction evidence="1">
        <text>(S)-2,3,4,5-tetrahydrodipicolinate + NAD(+) + H2O = (2S,4S)-4-hydroxy-2,3,4,5-tetrahydrodipicolinate + NADH + H(+)</text>
        <dbReference type="Rhea" id="RHEA:35323"/>
        <dbReference type="ChEBI" id="CHEBI:15377"/>
        <dbReference type="ChEBI" id="CHEBI:15378"/>
        <dbReference type="ChEBI" id="CHEBI:16845"/>
        <dbReference type="ChEBI" id="CHEBI:57540"/>
        <dbReference type="ChEBI" id="CHEBI:57945"/>
        <dbReference type="ChEBI" id="CHEBI:67139"/>
        <dbReference type="EC" id="1.17.1.8"/>
    </reaction>
</comment>
<comment type="catalytic activity">
    <reaction evidence="1">
        <text>(S)-2,3,4,5-tetrahydrodipicolinate + NADP(+) + H2O = (2S,4S)-4-hydroxy-2,3,4,5-tetrahydrodipicolinate + NADPH + H(+)</text>
        <dbReference type="Rhea" id="RHEA:35331"/>
        <dbReference type="ChEBI" id="CHEBI:15377"/>
        <dbReference type="ChEBI" id="CHEBI:15378"/>
        <dbReference type="ChEBI" id="CHEBI:16845"/>
        <dbReference type="ChEBI" id="CHEBI:57783"/>
        <dbReference type="ChEBI" id="CHEBI:58349"/>
        <dbReference type="ChEBI" id="CHEBI:67139"/>
        <dbReference type="EC" id="1.17.1.8"/>
    </reaction>
</comment>
<comment type="pathway">
    <text evidence="1">Amino-acid biosynthesis; L-lysine biosynthesis via DAP pathway; (S)-tetrahydrodipicolinate from L-aspartate: step 4/4.</text>
</comment>
<comment type="subcellular location">
    <subcellularLocation>
        <location evidence="1">Cytoplasm</location>
    </subcellularLocation>
</comment>
<comment type="similarity">
    <text evidence="1">Belongs to the DapB family.</text>
</comment>
<comment type="caution">
    <text evidence="2">Was originally thought to be a dihydrodipicolinate reductase (DHDPR), catalyzing the conversion of dihydrodipicolinate to tetrahydrodipicolinate. However, it was shown in E.coli that the substrate of the enzymatic reaction is not dihydrodipicolinate (DHDP) but in fact (2S,4S)-4-hydroxy-2,3,4,5-tetrahydrodipicolinic acid (HTPA), the product released by the DapA-catalyzed reaction.</text>
</comment>
<feature type="chain" id="PRO_1000057678" description="4-hydroxy-tetrahydrodipicolinate reductase">
    <location>
        <begin position="1"/>
        <end position="257"/>
    </location>
</feature>
<feature type="active site" description="Proton donor/acceptor" evidence="1">
    <location>
        <position position="146"/>
    </location>
</feature>
<feature type="active site" description="Proton donor" evidence="1">
    <location>
        <position position="150"/>
    </location>
</feature>
<feature type="binding site" evidence="1">
    <location>
        <begin position="8"/>
        <end position="13"/>
    </location>
    <ligand>
        <name>NAD(+)</name>
        <dbReference type="ChEBI" id="CHEBI:57540"/>
    </ligand>
</feature>
<feature type="binding site" evidence="1">
    <location>
        <begin position="90"/>
        <end position="92"/>
    </location>
    <ligand>
        <name>NAD(+)</name>
        <dbReference type="ChEBI" id="CHEBI:57540"/>
    </ligand>
</feature>
<feature type="binding site" evidence="1">
    <location>
        <begin position="114"/>
        <end position="117"/>
    </location>
    <ligand>
        <name>NAD(+)</name>
        <dbReference type="ChEBI" id="CHEBI:57540"/>
    </ligand>
</feature>
<feature type="binding site" evidence="1">
    <location>
        <position position="147"/>
    </location>
    <ligand>
        <name>(S)-2,3,4,5-tetrahydrodipicolinate</name>
        <dbReference type="ChEBI" id="CHEBI:16845"/>
    </ligand>
</feature>
<feature type="binding site" evidence="1">
    <location>
        <begin position="156"/>
        <end position="157"/>
    </location>
    <ligand>
        <name>(S)-2,3,4,5-tetrahydrodipicolinate</name>
        <dbReference type="ChEBI" id="CHEBI:16845"/>
    </ligand>
</feature>
<evidence type="ECO:0000255" key="1">
    <source>
        <dbReference type="HAMAP-Rule" id="MF_00102"/>
    </source>
</evidence>
<evidence type="ECO:0000305" key="2"/>
<sequence length="257" mass="27634">MVKIGILGSTGRVGSLLIDDLQNDKDAKLSAVHVTSKLLKTLPQDTIVTNDIKVLFDSCDVIIDFSKPSGTEALLTEVIENGAKKPLVIATTGLNKHQQNLLLEASKLVPILYATNMSLGVAVLNKLVTLASKTLRDFDIEIVEQHHRHKIDAPSGTALTLAEHAASARDLNLDDVRISGRDGNIGARTKDEIAVMALRGGDIVGRHTVGLYNDGEFLELNHTATARNTFSKGAIKVAKWIVGKDAKLYSINDALGL</sequence>
<reference key="1">
    <citation type="journal article" date="2007" name="PLoS ONE">
        <title>The complete genome sequence and analysis of the Epsilonproteobacterium Arcobacter butzleri.</title>
        <authorList>
            <person name="Miller W.G."/>
            <person name="Parker C.T."/>
            <person name="Rubenfield M."/>
            <person name="Mendz G.L."/>
            <person name="Woesten M.M.S.M."/>
            <person name="Ussery D.W."/>
            <person name="Stolz J.F."/>
            <person name="Binnewies T.T."/>
            <person name="Hallin P.F."/>
            <person name="Wang G."/>
            <person name="Malek J.A."/>
            <person name="Rogosin A."/>
            <person name="Stanker L.H."/>
            <person name="Mandrell R.E."/>
        </authorList>
    </citation>
    <scope>NUCLEOTIDE SEQUENCE [LARGE SCALE GENOMIC DNA]</scope>
    <source>
        <strain>RM4018</strain>
    </source>
</reference>
<organism>
    <name type="scientific">Aliarcobacter butzleri (strain RM4018)</name>
    <name type="common">Arcobacter butzleri</name>
    <dbReference type="NCBI Taxonomy" id="367737"/>
    <lineage>
        <taxon>Bacteria</taxon>
        <taxon>Pseudomonadati</taxon>
        <taxon>Campylobacterota</taxon>
        <taxon>Epsilonproteobacteria</taxon>
        <taxon>Campylobacterales</taxon>
        <taxon>Arcobacteraceae</taxon>
        <taxon>Aliarcobacter</taxon>
    </lineage>
</organism>